<comment type="function">
    <text evidence="1">Component of the ribosome, a large ribonucleoprotein complex responsible for the synthesis of proteins in the cell. The small ribosomal subunit (SSU) binds messenger RNAs (mRNAs) and translates the encoded message by selecting cognate aminoacyl-transfer RNA (tRNA) molecules. The large subunit (LSU) contains the ribosomal catalytic site termed the peptidyl transferase center (PTC), which catalyzes the formation of peptide bonds, thereby polymerizing the amino acids delivered by tRNAs into a polypeptide chain. The nascent polypeptides leave the ribosome through a tunnel in the LSU and interact with protein factors that function in enzymatic processing, targeting, and the membrane insertion of nascent chains at the exit of the ribosomal tunnel.</text>
</comment>
<comment type="subunit">
    <text evidence="1">Component of the large ribosomal subunit (LSU). Mature yeast ribosomes consist of a small (40S) and a large (60S) subunit. The 40S small subunit contains 1 molecule of ribosomal RNA (18S rRNA) and at least 33 different proteins. The large 60S subunit contains 3 rRNA molecules (25S, 5.8S and 5S rRNA) and at least 46 different proteins.</text>
</comment>
<comment type="subcellular location">
    <subcellularLocation>
        <location evidence="1">Cytoplasm</location>
    </subcellularLocation>
    <subcellularLocation>
        <location evidence="3">Nucleus</location>
    </subcellularLocation>
    <subcellularLocation>
        <location evidence="3">Nucleus</location>
        <location evidence="3">Nucleolus</location>
    </subcellularLocation>
</comment>
<comment type="miscellaneous">
    <text>There are 2 genes for eL15 in S.pombe.</text>
</comment>
<comment type="similarity">
    <text evidence="6">Belongs to the eukaryotic ribosomal protein eL15 family.</text>
</comment>
<gene>
    <name type="primary">rpl15</name>
    <name type="synonym">rpl1501</name>
    <name type="synonym">rpl15a</name>
    <name type="ORF">SPCC576.11</name>
</gene>
<dbReference type="EMBL" id="CU329672">
    <property type="protein sequence ID" value="CAA21190.1"/>
    <property type="molecule type" value="Genomic_DNA"/>
</dbReference>
<dbReference type="PIR" id="T41421">
    <property type="entry name" value="T41421"/>
</dbReference>
<dbReference type="RefSeq" id="NP_588438.1">
    <property type="nucleotide sequence ID" value="NM_001023429.2"/>
</dbReference>
<dbReference type="PDB" id="8ESQ">
    <property type="method" value="EM"/>
    <property type="resolution" value="2.80 A"/>
    <property type="chains" value="N=1-201"/>
</dbReference>
<dbReference type="PDB" id="8ESR">
    <property type="method" value="EM"/>
    <property type="resolution" value="3.20 A"/>
    <property type="chains" value="N=1-201"/>
</dbReference>
<dbReference type="PDB" id="8ETC">
    <property type="method" value="EM"/>
    <property type="resolution" value="3.10 A"/>
    <property type="chains" value="N=1-201"/>
</dbReference>
<dbReference type="PDB" id="8ETG">
    <property type="method" value="EM"/>
    <property type="resolution" value="3.40 A"/>
    <property type="chains" value="N=1-201"/>
</dbReference>
<dbReference type="PDB" id="8ETH">
    <property type="method" value="EM"/>
    <property type="resolution" value="3.80 A"/>
    <property type="chains" value="N=1-201"/>
</dbReference>
<dbReference type="PDB" id="8ETI">
    <property type="method" value="EM"/>
    <property type="resolution" value="3.70 A"/>
    <property type="chains" value="N=1-201"/>
</dbReference>
<dbReference type="PDB" id="8ETJ">
    <property type="method" value="EM"/>
    <property type="resolution" value="3.20 A"/>
    <property type="chains" value="N=1-201"/>
</dbReference>
<dbReference type="PDB" id="8EUG">
    <property type="method" value="EM"/>
    <property type="resolution" value="2.80 A"/>
    <property type="chains" value="N=1-201"/>
</dbReference>
<dbReference type="PDB" id="8EUI">
    <property type="method" value="EM"/>
    <property type="resolution" value="3.10 A"/>
    <property type="chains" value="N=1-201"/>
</dbReference>
<dbReference type="PDB" id="8EUP">
    <property type="method" value="EM"/>
    <property type="resolution" value="3.10 A"/>
    <property type="chains" value="N=1-201"/>
</dbReference>
<dbReference type="PDB" id="8EUY">
    <property type="method" value="EM"/>
    <property type="resolution" value="3.00 A"/>
    <property type="chains" value="N=1-201"/>
</dbReference>
<dbReference type="PDB" id="8EV3">
    <property type="method" value="EM"/>
    <property type="resolution" value="3.00 A"/>
    <property type="chains" value="N=1-201"/>
</dbReference>
<dbReference type="PDBsum" id="8ESQ"/>
<dbReference type="PDBsum" id="8ESR"/>
<dbReference type="PDBsum" id="8ETC"/>
<dbReference type="PDBsum" id="8ETG"/>
<dbReference type="PDBsum" id="8ETH"/>
<dbReference type="PDBsum" id="8ETI"/>
<dbReference type="PDBsum" id="8ETJ"/>
<dbReference type="PDBsum" id="8EUG"/>
<dbReference type="PDBsum" id="8EUI"/>
<dbReference type="PDBsum" id="8EUP"/>
<dbReference type="PDBsum" id="8EUY"/>
<dbReference type="PDBsum" id="8EV3"/>
<dbReference type="SMR" id="O74895"/>
<dbReference type="BioGRID" id="276033">
    <property type="interactions" value="8"/>
</dbReference>
<dbReference type="FunCoup" id="O74895">
    <property type="interactions" value="646"/>
</dbReference>
<dbReference type="IntAct" id="O74895">
    <property type="interactions" value="1"/>
</dbReference>
<dbReference type="STRING" id="284812.O74895"/>
<dbReference type="iPTMnet" id="O74895"/>
<dbReference type="PaxDb" id="4896-SPCC576.11.1"/>
<dbReference type="EnsemblFungi" id="SPCC576.11.1">
    <property type="protein sequence ID" value="SPCC576.11.1:pep"/>
    <property type="gene ID" value="SPCC576.11"/>
</dbReference>
<dbReference type="GeneID" id="2539470"/>
<dbReference type="KEGG" id="spo:2539470"/>
<dbReference type="PomBase" id="SPCC576.11">
    <property type="gene designation" value="rpl15"/>
</dbReference>
<dbReference type="VEuPathDB" id="FungiDB:SPCC576.11"/>
<dbReference type="eggNOG" id="KOG1678">
    <property type="taxonomic scope" value="Eukaryota"/>
</dbReference>
<dbReference type="HOGENOM" id="CLU_080796_0_0_1"/>
<dbReference type="InParanoid" id="O74895"/>
<dbReference type="OMA" id="HRICVRR"/>
<dbReference type="PhylomeDB" id="O74895"/>
<dbReference type="Reactome" id="R-SPO-156827">
    <property type="pathway name" value="L13a-mediated translational silencing of Ceruloplasmin expression"/>
</dbReference>
<dbReference type="Reactome" id="R-SPO-1799339">
    <property type="pathway name" value="SRP-dependent cotranslational protein targeting to membrane"/>
</dbReference>
<dbReference type="Reactome" id="R-SPO-72689">
    <property type="pathway name" value="Formation of a pool of free 40S subunits"/>
</dbReference>
<dbReference type="Reactome" id="R-SPO-72706">
    <property type="pathway name" value="GTP hydrolysis and joining of the 60S ribosomal subunit"/>
</dbReference>
<dbReference type="Reactome" id="R-SPO-975956">
    <property type="pathway name" value="Nonsense Mediated Decay (NMD) independent of the Exon Junction Complex (EJC)"/>
</dbReference>
<dbReference type="Reactome" id="R-SPO-975957">
    <property type="pathway name" value="Nonsense Mediated Decay (NMD) enhanced by the Exon Junction Complex (EJC)"/>
</dbReference>
<dbReference type="PRO" id="PR:O74895"/>
<dbReference type="Proteomes" id="UP000002485">
    <property type="component" value="Chromosome III"/>
</dbReference>
<dbReference type="GO" id="GO:0022625">
    <property type="term" value="C:cytosolic large ribosomal subunit"/>
    <property type="evidence" value="ECO:0000318"/>
    <property type="project" value="GO_Central"/>
</dbReference>
<dbReference type="GO" id="GO:0005730">
    <property type="term" value="C:nucleolus"/>
    <property type="evidence" value="ECO:0007005"/>
    <property type="project" value="PomBase"/>
</dbReference>
<dbReference type="GO" id="GO:0005634">
    <property type="term" value="C:nucleus"/>
    <property type="evidence" value="ECO:0007005"/>
    <property type="project" value="PomBase"/>
</dbReference>
<dbReference type="GO" id="GO:0030684">
    <property type="term" value="C:preribosome"/>
    <property type="evidence" value="ECO:0000314"/>
    <property type="project" value="PomBase"/>
</dbReference>
<dbReference type="GO" id="GO:0003723">
    <property type="term" value="F:RNA binding"/>
    <property type="evidence" value="ECO:0000318"/>
    <property type="project" value="GO_Central"/>
</dbReference>
<dbReference type="GO" id="GO:0003735">
    <property type="term" value="F:structural constituent of ribosome"/>
    <property type="evidence" value="ECO:0000318"/>
    <property type="project" value="GO_Central"/>
</dbReference>
<dbReference type="GO" id="GO:0002181">
    <property type="term" value="P:cytoplasmic translation"/>
    <property type="evidence" value="ECO:0000318"/>
    <property type="project" value="GO_Central"/>
</dbReference>
<dbReference type="FunFam" id="3.40.1120.10:FF:000001">
    <property type="entry name" value="Ribosomal protein L15"/>
    <property type="match status" value="1"/>
</dbReference>
<dbReference type="Gene3D" id="3.40.1120.10">
    <property type="entry name" value="Ribosomal protein l15e"/>
    <property type="match status" value="1"/>
</dbReference>
<dbReference type="InterPro" id="IPR024794">
    <property type="entry name" value="Rbsml_eL15_core_dom_sf"/>
</dbReference>
<dbReference type="InterPro" id="IPR000439">
    <property type="entry name" value="Ribosomal_eL15"/>
</dbReference>
<dbReference type="InterPro" id="IPR020925">
    <property type="entry name" value="Ribosomal_eL15_CS"/>
</dbReference>
<dbReference type="InterPro" id="IPR012678">
    <property type="entry name" value="Ribosomal_uL23/eL15/eS24_sf"/>
</dbReference>
<dbReference type="NCBIfam" id="NF003269">
    <property type="entry name" value="PRK04243.1"/>
    <property type="match status" value="1"/>
</dbReference>
<dbReference type="PANTHER" id="PTHR11847:SF4">
    <property type="entry name" value="LARGE RIBOSOMAL SUBUNIT PROTEIN EL15"/>
    <property type="match status" value="1"/>
</dbReference>
<dbReference type="PANTHER" id="PTHR11847">
    <property type="entry name" value="RIBOSOMAL PROTEIN L15"/>
    <property type="match status" value="1"/>
</dbReference>
<dbReference type="Pfam" id="PF00827">
    <property type="entry name" value="Ribosomal_L15e"/>
    <property type="match status" value="1"/>
</dbReference>
<dbReference type="SMART" id="SM01384">
    <property type="entry name" value="Ribosomal_L15e"/>
    <property type="match status" value="1"/>
</dbReference>
<dbReference type="SUPFAM" id="SSF54189">
    <property type="entry name" value="Ribosomal proteins S24e, L23 and L15e"/>
    <property type="match status" value="1"/>
</dbReference>
<dbReference type="PROSITE" id="PS01194">
    <property type="entry name" value="RIBOSOMAL_L15E"/>
    <property type="match status" value="1"/>
</dbReference>
<sequence>MGAYKYLEELAKKKQSDVNLFLSRVRAWEYRQMNVIHRASRPSRPDKARRLGYKAKQGYVIYRIRVRRGGRKRPVPKGQTYGKPVHQGVNHLKYQRSARCTAEERVGRYCSNLRVLNSYWVNQDATYKFFEVILVDPSHKAIRRDPRINWIVNPVHKHRESRGLTSIGKKSRGIGKGHRFNNSPQHATWLRHNTLSLRRYR</sequence>
<reference key="1">
    <citation type="journal article" date="2002" name="Nature">
        <title>The genome sequence of Schizosaccharomyces pombe.</title>
        <authorList>
            <person name="Wood V."/>
            <person name="Gwilliam R."/>
            <person name="Rajandream M.A."/>
            <person name="Lyne M.H."/>
            <person name="Lyne R."/>
            <person name="Stewart A."/>
            <person name="Sgouros J.G."/>
            <person name="Peat N."/>
            <person name="Hayles J."/>
            <person name="Baker S.G."/>
            <person name="Basham D."/>
            <person name="Bowman S."/>
            <person name="Brooks K."/>
            <person name="Brown D."/>
            <person name="Brown S."/>
            <person name="Chillingworth T."/>
            <person name="Churcher C.M."/>
            <person name="Collins M."/>
            <person name="Connor R."/>
            <person name="Cronin A."/>
            <person name="Davis P."/>
            <person name="Feltwell T."/>
            <person name="Fraser A."/>
            <person name="Gentles S."/>
            <person name="Goble A."/>
            <person name="Hamlin N."/>
            <person name="Harris D.E."/>
            <person name="Hidalgo J."/>
            <person name="Hodgson G."/>
            <person name="Holroyd S."/>
            <person name="Hornsby T."/>
            <person name="Howarth S."/>
            <person name="Huckle E.J."/>
            <person name="Hunt S."/>
            <person name="Jagels K."/>
            <person name="James K.D."/>
            <person name="Jones L."/>
            <person name="Jones M."/>
            <person name="Leather S."/>
            <person name="McDonald S."/>
            <person name="McLean J."/>
            <person name="Mooney P."/>
            <person name="Moule S."/>
            <person name="Mungall K.L."/>
            <person name="Murphy L.D."/>
            <person name="Niblett D."/>
            <person name="Odell C."/>
            <person name="Oliver K."/>
            <person name="O'Neil S."/>
            <person name="Pearson D."/>
            <person name="Quail M.A."/>
            <person name="Rabbinowitsch E."/>
            <person name="Rutherford K.M."/>
            <person name="Rutter S."/>
            <person name="Saunders D."/>
            <person name="Seeger K."/>
            <person name="Sharp S."/>
            <person name="Skelton J."/>
            <person name="Simmonds M.N."/>
            <person name="Squares R."/>
            <person name="Squares S."/>
            <person name="Stevens K."/>
            <person name="Taylor K."/>
            <person name="Taylor R.G."/>
            <person name="Tivey A."/>
            <person name="Walsh S.V."/>
            <person name="Warren T."/>
            <person name="Whitehead S."/>
            <person name="Woodward J.R."/>
            <person name="Volckaert G."/>
            <person name="Aert R."/>
            <person name="Robben J."/>
            <person name="Grymonprez B."/>
            <person name="Weltjens I."/>
            <person name="Vanstreels E."/>
            <person name="Rieger M."/>
            <person name="Schaefer M."/>
            <person name="Mueller-Auer S."/>
            <person name="Gabel C."/>
            <person name="Fuchs M."/>
            <person name="Duesterhoeft A."/>
            <person name="Fritzc C."/>
            <person name="Holzer E."/>
            <person name="Moestl D."/>
            <person name="Hilbert H."/>
            <person name="Borzym K."/>
            <person name="Langer I."/>
            <person name="Beck A."/>
            <person name="Lehrach H."/>
            <person name="Reinhardt R."/>
            <person name="Pohl T.M."/>
            <person name="Eger P."/>
            <person name="Zimmermann W."/>
            <person name="Wedler H."/>
            <person name="Wambutt R."/>
            <person name="Purnelle B."/>
            <person name="Goffeau A."/>
            <person name="Cadieu E."/>
            <person name="Dreano S."/>
            <person name="Gloux S."/>
            <person name="Lelaure V."/>
            <person name="Mottier S."/>
            <person name="Galibert F."/>
            <person name="Aves S.J."/>
            <person name="Xiang Z."/>
            <person name="Hunt C."/>
            <person name="Moore K."/>
            <person name="Hurst S.M."/>
            <person name="Lucas M."/>
            <person name="Rochet M."/>
            <person name="Gaillardin C."/>
            <person name="Tallada V.A."/>
            <person name="Garzon A."/>
            <person name="Thode G."/>
            <person name="Daga R.R."/>
            <person name="Cruzado L."/>
            <person name="Jimenez J."/>
            <person name="Sanchez M."/>
            <person name="del Rey F."/>
            <person name="Benito J."/>
            <person name="Dominguez A."/>
            <person name="Revuelta J.L."/>
            <person name="Moreno S."/>
            <person name="Armstrong J."/>
            <person name="Forsburg S.L."/>
            <person name="Cerutti L."/>
            <person name="Lowe T."/>
            <person name="McCombie W.R."/>
            <person name="Paulsen I."/>
            <person name="Potashkin J."/>
            <person name="Shpakovski G.V."/>
            <person name="Ussery D."/>
            <person name="Barrell B.G."/>
            <person name="Nurse P."/>
        </authorList>
    </citation>
    <scope>NUCLEOTIDE SEQUENCE [LARGE SCALE GENOMIC DNA]</scope>
    <source>
        <strain>972 / ATCC 24843</strain>
    </source>
</reference>
<reference key="2">
    <citation type="journal article" date="1983" name="Mol. Gen. Genet.">
        <title>Yeast ribosomal proteins: VII. Cytoplasmic ribosomal proteins from Schizosaccharomyces pombe.</title>
        <authorList>
            <person name="Otaka E."/>
            <person name="Higo K."/>
            <person name="Itoh T."/>
        </authorList>
    </citation>
    <scope>PROTEIN SEQUENCE OF 2-30</scope>
</reference>
<reference key="3">
    <citation type="journal article" date="2006" name="Nat. Biotechnol.">
        <title>ORFeome cloning and global analysis of protein localization in the fission yeast Schizosaccharomyces pombe.</title>
        <authorList>
            <person name="Matsuyama A."/>
            <person name="Arai R."/>
            <person name="Yashiroda Y."/>
            <person name="Shirai A."/>
            <person name="Kamata A."/>
            <person name="Sekido S."/>
            <person name="Kobayashi Y."/>
            <person name="Hashimoto A."/>
            <person name="Hamamoto M."/>
            <person name="Hiraoka Y."/>
            <person name="Horinouchi S."/>
            <person name="Yoshida M."/>
        </authorList>
    </citation>
    <scope>SUBCELLULAR LOCATION [LARGE SCALE ANALYSIS]</scope>
</reference>
<protein>
    <recommendedName>
        <fullName evidence="6">Large ribosomal subunit protein eL15A</fullName>
    </recommendedName>
    <alternativeName>
        <fullName>60S ribosomal protein L15-A</fullName>
    </alternativeName>
    <alternativeName>
        <fullName evidence="5">SP-L12</fullName>
    </alternativeName>
</protein>
<organism>
    <name type="scientific">Schizosaccharomyces pombe (strain 972 / ATCC 24843)</name>
    <name type="common">Fission yeast</name>
    <dbReference type="NCBI Taxonomy" id="284812"/>
    <lineage>
        <taxon>Eukaryota</taxon>
        <taxon>Fungi</taxon>
        <taxon>Dikarya</taxon>
        <taxon>Ascomycota</taxon>
        <taxon>Taphrinomycotina</taxon>
        <taxon>Schizosaccharomycetes</taxon>
        <taxon>Schizosaccharomycetales</taxon>
        <taxon>Schizosaccharomycetaceae</taxon>
        <taxon>Schizosaccharomyces</taxon>
    </lineage>
</organism>
<proteinExistence type="evidence at protein level"/>
<name>RL15A_SCHPO</name>
<keyword id="KW-0002">3D-structure</keyword>
<keyword id="KW-0963">Cytoplasm</keyword>
<keyword id="KW-0903">Direct protein sequencing</keyword>
<keyword id="KW-0539">Nucleus</keyword>
<keyword id="KW-1185">Reference proteome</keyword>
<keyword id="KW-0687">Ribonucleoprotein</keyword>
<keyword id="KW-0689">Ribosomal protein</keyword>
<evidence type="ECO:0000250" key="1">
    <source>
        <dbReference type="UniProtKB" id="P05748"/>
    </source>
</evidence>
<evidence type="ECO:0000256" key="2">
    <source>
        <dbReference type="SAM" id="MobiDB-lite"/>
    </source>
</evidence>
<evidence type="ECO:0000269" key="3">
    <source>
    </source>
</evidence>
<evidence type="ECO:0000269" key="4">
    <source>
    </source>
</evidence>
<evidence type="ECO:0000303" key="5">
    <source>
    </source>
</evidence>
<evidence type="ECO:0000305" key="6"/>
<evidence type="ECO:0007829" key="7">
    <source>
        <dbReference type="PDB" id="8EUP"/>
    </source>
</evidence>
<evidence type="ECO:0007829" key="8">
    <source>
        <dbReference type="PDB" id="8EUY"/>
    </source>
</evidence>
<feature type="initiator methionine" description="Removed" evidence="4">
    <location>
        <position position="1"/>
    </location>
</feature>
<feature type="chain" id="PRO_0000127564" description="Large ribosomal subunit protein eL15A">
    <location>
        <begin position="2"/>
        <end position="201"/>
    </location>
</feature>
<feature type="region of interest" description="Disordered" evidence="2">
    <location>
        <begin position="161"/>
        <end position="182"/>
    </location>
</feature>
<feature type="compositionally biased region" description="Basic residues" evidence="2">
    <location>
        <begin position="169"/>
        <end position="179"/>
    </location>
</feature>
<feature type="helix" evidence="8">
    <location>
        <begin position="4"/>
        <end position="10"/>
    </location>
</feature>
<feature type="strand" evidence="7">
    <location>
        <begin position="14"/>
        <end position="16"/>
    </location>
</feature>
<feature type="helix" evidence="8">
    <location>
        <begin position="17"/>
        <end position="32"/>
    </location>
</feature>
<feature type="strand" evidence="8">
    <location>
        <begin position="35"/>
        <end position="41"/>
    </location>
</feature>
<feature type="helix" evidence="8">
    <location>
        <begin position="45"/>
        <end position="50"/>
    </location>
</feature>
<feature type="strand" evidence="8">
    <location>
        <begin position="59"/>
        <end position="67"/>
    </location>
</feature>
<feature type="helix" evidence="8">
    <location>
        <begin position="98"/>
        <end position="109"/>
    </location>
</feature>
<feature type="turn" evidence="8">
    <location>
        <begin position="110"/>
        <end position="112"/>
    </location>
</feature>
<feature type="strand" evidence="8">
    <location>
        <begin position="113"/>
        <end position="123"/>
    </location>
</feature>
<feature type="strand" evidence="8">
    <location>
        <begin position="125"/>
        <end position="135"/>
    </location>
</feature>
<feature type="helix" evidence="8">
    <location>
        <begin position="140"/>
        <end position="143"/>
    </location>
</feature>
<feature type="turn" evidence="8">
    <location>
        <begin position="146"/>
        <end position="148"/>
    </location>
</feature>
<feature type="helix" evidence="8">
    <location>
        <begin position="149"/>
        <end position="152"/>
    </location>
</feature>
<feature type="helix" evidence="8">
    <location>
        <begin position="154"/>
        <end position="156"/>
    </location>
</feature>
<feature type="helix" evidence="8">
    <location>
        <begin position="159"/>
        <end position="161"/>
    </location>
</feature>
<feature type="helix" evidence="8">
    <location>
        <begin position="166"/>
        <end position="171"/>
    </location>
</feature>
<feature type="strand" evidence="8">
    <location>
        <begin position="176"/>
        <end position="178"/>
    </location>
</feature>
<feature type="helix" evidence="8">
    <location>
        <begin position="190"/>
        <end position="193"/>
    </location>
</feature>
<feature type="strand" evidence="8">
    <location>
        <begin position="194"/>
        <end position="197"/>
    </location>
</feature>
<accession>O74895</accession>